<gene>
    <name evidence="1" type="primary">mdtC</name>
    <name type="ordered locus">SG2160</name>
</gene>
<accession>B5RBW9</accession>
<sequence length="1026" mass="110921">MRFFALFIYRPVATILIAAAITLCGILGFRLLPVAPLPQVDFPVIMVSASLPGASPETMASSVATPLERSLGRIAGVNEMTSSSSLGSTRIILEFNFDRDINGAARDVQAAINAAQSLLPGGMPSRPTYRKANPSDAPIMILTLTSESWSQGKLYDFASTQLAQTIAQIDGVGDIDVGGSSLPAVRVGLNPQALFNQGVSLDEVREAIDSANVRRPQGAIEDSVHRWQIQTNDELKTAAEYQPLIIHYNNGAAVRLGDVASVTDSVQDVRNAGMTNAKPAILLMIRKLPEANIIQTVDGIRAKLPELRAMIPAAIDLQIAQDRSPTIRASLQEVEETLAISVALVILVVFLFLRSGRATLIPAVAVPVSLIGTFAAMYLCGFSLNNLSLMALTIATGFVVDDAIVVLENIARHLEAGMKPLQAALQGTREVGFTVISMSLSLVAVFLPLLLMGGLPGRLLREFAVTLSVAIGISLVVSLTLTPMMCGWMLKSSKPRTQPRKRGVGRLLVALQQGYGTSLKWVLNHTRLVGVVFLGTVALNIWLYIAIPKTFFPEQDTGVLMGGIQADQSISFQAMRGKLQDFMKIIRDDPAVNNVTGFTGGSRVNSGMMFITLKPRGERKETAQQIIDRLRVKLAKEPGARLFLMAVQDIRVGGRQANASYQYTLLSDSLAALREWEPKIRKALSALPQLADVNSDQQDNGAEMNLIYDRDTMSRLGIDVQAANSLLNNAFGQRQISTIYQPMNQYKVVMEVDPRYSQDISALEKMFVINRDGKAIPLSYFAQWRPANAPLSVNHQGLSAASTIAFNLPTGTSLSQATEAINRTMTQLGVPSTVRGSFSGTAQVFQQTMNSQLILIVAAIATVYIVLGILYESYVHPLTILSTLPSAGVGALLALELFNAPFSLIALIGIMLLIGIVKKNAIMMVDFALEAQRSGGLTPAQAIFQACLLRFRPIMMTTLAALFGALPLVLSGGDGSELRQPLGITIVGGLVMSQLLTLYTTPVVYLFFDRLRLRFSRKNSKPVVEI</sequence>
<name>MDTC_SALG2</name>
<organism>
    <name type="scientific">Salmonella gallinarum (strain 287/91 / NCTC 13346)</name>
    <dbReference type="NCBI Taxonomy" id="550538"/>
    <lineage>
        <taxon>Bacteria</taxon>
        <taxon>Pseudomonadati</taxon>
        <taxon>Pseudomonadota</taxon>
        <taxon>Gammaproteobacteria</taxon>
        <taxon>Enterobacterales</taxon>
        <taxon>Enterobacteriaceae</taxon>
        <taxon>Salmonella</taxon>
    </lineage>
</organism>
<keyword id="KW-0997">Cell inner membrane</keyword>
<keyword id="KW-1003">Cell membrane</keyword>
<keyword id="KW-0472">Membrane</keyword>
<keyword id="KW-0812">Transmembrane</keyword>
<keyword id="KW-1133">Transmembrane helix</keyword>
<keyword id="KW-0813">Transport</keyword>
<feature type="chain" id="PRO_1000145680" description="Multidrug resistance protein MdtC">
    <location>
        <begin position="1"/>
        <end position="1026"/>
    </location>
</feature>
<feature type="transmembrane region" description="Helical" evidence="1">
    <location>
        <begin position="15"/>
        <end position="35"/>
    </location>
</feature>
<feature type="transmembrane region" description="Helical" evidence="1">
    <location>
        <begin position="333"/>
        <end position="353"/>
    </location>
</feature>
<feature type="transmembrane region" description="Helical" evidence="1">
    <location>
        <begin position="360"/>
        <end position="380"/>
    </location>
</feature>
<feature type="transmembrane region" description="Helical" evidence="1">
    <location>
        <begin position="387"/>
        <end position="407"/>
    </location>
</feature>
<feature type="transmembrane region" description="Helical" evidence="1">
    <location>
        <begin position="431"/>
        <end position="451"/>
    </location>
</feature>
<feature type="transmembrane region" description="Helical" evidence="1">
    <location>
        <begin position="463"/>
        <end position="483"/>
    </location>
</feature>
<feature type="transmembrane region" description="Helical" evidence="1">
    <location>
        <begin position="528"/>
        <end position="548"/>
    </location>
</feature>
<feature type="transmembrane region" description="Helical" evidence="1">
    <location>
        <begin position="853"/>
        <end position="873"/>
    </location>
</feature>
<feature type="transmembrane region" description="Helical" evidence="1">
    <location>
        <begin position="897"/>
        <end position="917"/>
    </location>
</feature>
<feature type="transmembrane region" description="Helical" evidence="1">
    <location>
        <begin position="953"/>
        <end position="973"/>
    </location>
</feature>
<feature type="transmembrane region" description="Helical" evidence="1">
    <location>
        <begin position="984"/>
        <end position="1004"/>
    </location>
</feature>
<dbReference type="EMBL" id="AM933173">
    <property type="protein sequence ID" value="CAR38000.1"/>
    <property type="molecule type" value="Genomic_DNA"/>
</dbReference>
<dbReference type="RefSeq" id="WP_001210069.1">
    <property type="nucleotide sequence ID" value="NC_011274.1"/>
</dbReference>
<dbReference type="SMR" id="B5RBW9"/>
<dbReference type="KEGG" id="seg:SG2160"/>
<dbReference type="HOGENOM" id="CLU_002755_1_2_6"/>
<dbReference type="Proteomes" id="UP000008321">
    <property type="component" value="Chromosome"/>
</dbReference>
<dbReference type="GO" id="GO:0005886">
    <property type="term" value="C:plasma membrane"/>
    <property type="evidence" value="ECO:0007669"/>
    <property type="project" value="UniProtKB-SubCell"/>
</dbReference>
<dbReference type="GO" id="GO:0042910">
    <property type="term" value="F:xenobiotic transmembrane transporter activity"/>
    <property type="evidence" value="ECO:0007669"/>
    <property type="project" value="TreeGrafter"/>
</dbReference>
<dbReference type="FunFam" id="1.20.1640.10:FF:000001">
    <property type="entry name" value="Efflux pump membrane transporter"/>
    <property type="match status" value="1"/>
</dbReference>
<dbReference type="FunFam" id="3.30.70.1430:FF:000001">
    <property type="entry name" value="Efflux pump membrane transporter"/>
    <property type="match status" value="1"/>
</dbReference>
<dbReference type="FunFam" id="3.30.2090.10:FF:000004">
    <property type="entry name" value="Multidrug resistance protein MdtC"/>
    <property type="match status" value="1"/>
</dbReference>
<dbReference type="FunFam" id="3.30.2090.10:FF:000005">
    <property type="entry name" value="Multidrug resistance protein MdtC"/>
    <property type="match status" value="1"/>
</dbReference>
<dbReference type="FunFam" id="3.30.70.1430:FF:000004">
    <property type="entry name" value="Multidrug resistance protein MdtC"/>
    <property type="match status" value="1"/>
</dbReference>
<dbReference type="Gene3D" id="3.30.70.1430">
    <property type="entry name" value="Multidrug efflux transporter AcrB pore domain"/>
    <property type="match status" value="2"/>
</dbReference>
<dbReference type="Gene3D" id="3.30.70.1440">
    <property type="entry name" value="Multidrug efflux transporter AcrB pore domain"/>
    <property type="match status" value="1"/>
</dbReference>
<dbReference type="Gene3D" id="3.30.70.1320">
    <property type="entry name" value="Multidrug efflux transporter AcrB pore domain like"/>
    <property type="match status" value="1"/>
</dbReference>
<dbReference type="Gene3D" id="3.30.2090.10">
    <property type="entry name" value="Multidrug efflux transporter AcrB TolC docking domain, DN and DC subdomains"/>
    <property type="match status" value="2"/>
</dbReference>
<dbReference type="Gene3D" id="1.20.1640.10">
    <property type="entry name" value="Multidrug efflux transporter AcrB transmembrane domain"/>
    <property type="match status" value="2"/>
</dbReference>
<dbReference type="HAMAP" id="MF_01424">
    <property type="entry name" value="MdtC"/>
    <property type="match status" value="1"/>
</dbReference>
<dbReference type="InterPro" id="IPR027463">
    <property type="entry name" value="AcrB_DN_DC_subdom"/>
</dbReference>
<dbReference type="InterPro" id="IPR001036">
    <property type="entry name" value="Acrflvin-R"/>
</dbReference>
<dbReference type="InterPro" id="IPR023931">
    <property type="entry name" value="Multidrug-R_MdtC"/>
</dbReference>
<dbReference type="NCBIfam" id="NF007905">
    <property type="entry name" value="PRK10614.1"/>
    <property type="match status" value="1"/>
</dbReference>
<dbReference type="NCBIfam" id="NF033617">
    <property type="entry name" value="RND_permease_2"/>
    <property type="match status" value="1"/>
</dbReference>
<dbReference type="PANTHER" id="PTHR32063">
    <property type="match status" value="1"/>
</dbReference>
<dbReference type="PANTHER" id="PTHR32063:SF34">
    <property type="entry name" value="MULTIDRUG RESISTANCE PROTEIN MDTC"/>
    <property type="match status" value="1"/>
</dbReference>
<dbReference type="Pfam" id="PF00873">
    <property type="entry name" value="ACR_tran"/>
    <property type="match status" value="1"/>
</dbReference>
<dbReference type="PRINTS" id="PR00702">
    <property type="entry name" value="ACRIFLAVINRP"/>
</dbReference>
<dbReference type="SUPFAM" id="SSF82693">
    <property type="entry name" value="Multidrug efflux transporter AcrB pore domain, PN1, PN2, PC1 and PC2 subdomains"/>
    <property type="match status" value="4"/>
</dbReference>
<dbReference type="SUPFAM" id="SSF82714">
    <property type="entry name" value="Multidrug efflux transporter AcrB TolC docking domain, DN and DC subdomains"/>
    <property type="match status" value="2"/>
</dbReference>
<dbReference type="SUPFAM" id="SSF82866">
    <property type="entry name" value="Multidrug efflux transporter AcrB transmembrane domain"/>
    <property type="match status" value="2"/>
</dbReference>
<proteinExistence type="inferred from homology"/>
<protein>
    <recommendedName>
        <fullName evidence="1">Multidrug resistance protein MdtC</fullName>
    </recommendedName>
    <alternativeName>
        <fullName evidence="1">Multidrug transporter MdtC</fullName>
    </alternativeName>
</protein>
<comment type="subunit">
    <text evidence="1">Part of a tripartite efflux system composed of MdtA, MdtB and MdtC. MdtC forms a heteromultimer with MdtB.</text>
</comment>
<comment type="subcellular location">
    <subcellularLocation>
        <location evidence="1">Cell inner membrane</location>
        <topology evidence="1">Multi-pass membrane protein</topology>
    </subcellularLocation>
</comment>
<comment type="similarity">
    <text evidence="1">Belongs to the resistance-nodulation-cell division (RND) (TC 2.A.6) family. MdtC subfamily.</text>
</comment>
<evidence type="ECO:0000255" key="1">
    <source>
        <dbReference type="HAMAP-Rule" id="MF_01424"/>
    </source>
</evidence>
<reference key="1">
    <citation type="journal article" date="2008" name="Genome Res.">
        <title>Comparative genome analysis of Salmonella enteritidis PT4 and Salmonella gallinarum 287/91 provides insights into evolutionary and host adaptation pathways.</title>
        <authorList>
            <person name="Thomson N.R."/>
            <person name="Clayton D.J."/>
            <person name="Windhorst D."/>
            <person name="Vernikos G."/>
            <person name="Davidson S."/>
            <person name="Churcher C."/>
            <person name="Quail M.A."/>
            <person name="Stevens M."/>
            <person name="Jones M.A."/>
            <person name="Watson M."/>
            <person name="Barron A."/>
            <person name="Layton A."/>
            <person name="Pickard D."/>
            <person name="Kingsley R.A."/>
            <person name="Bignell A."/>
            <person name="Clark L."/>
            <person name="Harris B."/>
            <person name="Ormond D."/>
            <person name="Abdellah Z."/>
            <person name="Brooks K."/>
            <person name="Cherevach I."/>
            <person name="Chillingworth T."/>
            <person name="Woodward J."/>
            <person name="Norberczak H."/>
            <person name="Lord A."/>
            <person name="Arrowsmith C."/>
            <person name="Jagels K."/>
            <person name="Moule S."/>
            <person name="Mungall K."/>
            <person name="Saunders M."/>
            <person name="Whitehead S."/>
            <person name="Chabalgoity J.A."/>
            <person name="Maskell D."/>
            <person name="Humphreys T."/>
            <person name="Roberts M."/>
            <person name="Barrow P.A."/>
            <person name="Dougan G."/>
            <person name="Parkhill J."/>
        </authorList>
    </citation>
    <scope>NUCLEOTIDE SEQUENCE [LARGE SCALE GENOMIC DNA]</scope>
    <source>
        <strain>287/91 / NCTC 13346</strain>
    </source>
</reference>